<feature type="chain" id="PRO_0000360490" description="Uncharacterized protein YhjP">
    <location>
        <begin position="1"/>
        <end position="575"/>
    </location>
</feature>
<feature type="domain" description="HTH marR-type">
    <location>
        <begin position="1"/>
        <end position="120"/>
    </location>
</feature>
<feature type="DNA-binding region" description="H-T-H motif" evidence="1">
    <location>
        <begin position="26"/>
        <end position="49"/>
    </location>
</feature>
<feature type="region of interest" description="Solute-binding region">
    <location>
        <begin position="176"/>
        <end position="490"/>
    </location>
</feature>
<protein>
    <recommendedName>
        <fullName>Uncharacterized protein YhjP</fullName>
    </recommendedName>
</protein>
<sequence length="575" mass="66375">MKLIEHYVALVKTGCAEYGQMNEMTLTEIADCLFCTERNAKLILHKLENSNWIIRESGAGRGRKSKIAFLRRPEELLLQTAKEYTMSGKLKKAKELLQQYQSAFPGLQNEYNMWLSEVFGFVTETGENGAKDVLRLFITPESVSSLDPCQIFLRSEGHFVKQIFDTLFTFDSDMQEPKPHLVHGWEEVGKKQWRFFLRKGVLFHNGQPLTSRDVAFTFQRFLELADNPYKWLLHGVKQVLEKGPYCVELILDKPNALLPYALCDERLSILPAEQGGGKNGTGPFQMNQQHSGMLVLEANERYFKGRPYLDRVEFVFSEQAGEMNGFTIQEKQTCPEQQTVFDERHVQYLSLNLKKKGPLQHRSFRKALRLLISSERLVREAGGHRRIPVTSFLHPSPFEWEGVSPSELLKKSGYEGETIVLYTFSETDHREDAEWIQNICAQHGIRLTLQFCDAADLRRPEIVQMADIIHDSATFYQDSEFGFLHLLLSENSFLYQHLSEKLTQICSGMTERMFSMPDRCSRINILRDIDRQMIQELNAIPLYQNVLQVTSSKNVKGLVLDEEGWIDLYSVWLSK</sequence>
<evidence type="ECO:0000255" key="1"/>
<evidence type="ECO:0000305" key="2"/>
<reference key="1">
    <citation type="journal article" date="1998" name="Microbiology">
        <title>The 172 kb prkA-addAB region from 83 degrees to 97 degrees of the Bacillus subtilis chromosome contains several dysfunctional genes, the glyB marker, many genes encoding transporter proteins, and the ubiquitous hit gene.</title>
        <authorList>
            <person name="Noback M.A."/>
            <person name="Holsappel S."/>
            <person name="Kiewiet R."/>
            <person name="Terpstra P."/>
            <person name="Wambutt R."/>
            <person name="Wedler H."/>
            <person name="Venema G."/>
            <person name="Bron S."/>
        </authorList>
    </citation>
    <scope>NUCLEOTIDE SEQUENCE [GENOMIC DNA]</scope>
    <source>
        <strain>168</strain>
    </source>
</reference>
<reference key="2">
    <citation type="journal article" date="1997" name="Nature">
        <title>The complete genome sequence of the Gram-positive bacterium Bacillus subtilis.</title>
        <authorList>
            <person name="Kunst F."/>
            <person name="Ogasawara N."/>
            <person name="Moszer I."/>
            <person name="Albertini A.M."/>
            <person name="Alloni G."/>
            <person name="Azevedo V."/>
            <person name="Bertero M.G."/>
            <person name="Bessieres P."/>
            <person name="Bolotin A."/>
            <person name="Borchert S."/>
            <person name="Borriss R."/>
            <person name="Boursier L."/>
            <person name="Brans A."/>
            <person name="Braun M."/>
            <person name="Brignell S.C."/>
            <person name="Bron S."/>
            <person name="Brouillet S."/>
            <person name="Bruschi C.V."/>
            <person name="Caldwell B."/>
            <person name="Capuano V."/>
            <person name="Carter N.M."/>
            <person name="Choi S.-K."/>
            <person name="Codani J.-J."/>
            <person name="Connerton I.F."/>
            <person name="Cummings N.J."/>
            <person name="Daniel R.A."/>
            <person name="Denizot F."/>
            <person name="Devine K.M."/>
            <person name="Duesterhoeft A."/>
            <person name="Ehrlich S.D."/>
            <person name="Emmerson P.T."/>
            <person name="Entian K.-D."/>
            <person name="Errington J."/>
            <person name="Fabret C."/>
            <person name="Ferrari E."/>
            <person name="Foulger D."/>
            <person name="Fritz C."/>
            <person name="Fujita M."/>
            <person name="Fujita Y."/>
            <person name="Fuma S."/>
            <person name="Galizzi A."/>
            <person name="Galleron N."/>
            <person name="Ghim S.-Y."/>
            <person name="Glaser P."/>
            <person name="Goffeau A."/>
            <person name="Golightly E.J."/>
            <person name="Grandi G."/>
            <person name="Guiseppi G."/>
            <person name="Guy B.J."/>
            <person name="Haga K."/>
            <person name="Haiech J."/>
            <person name="Harwood C.R."/>
            <person name="Henaut A."/>
            <person name="Hilbert H."/>
            <person name="Holsappel S."/>
            <person name="Hosono S."/>
            <person name="Hullo M.-F."/>
            <person name="Itaya M."/>
            <person name="Jones L.-M."/>
            <person name="Joris B."/>
            <person name="Karamata D."/>
            <person name="Kasahara Y."/>
            <person name="Klaerr-Blanchard M."/>
            <person name="Klein C."/>
            <person name="Kobayashi Y."/>
            <person name="Koetter P."/>
            <person name="Koningstein G."/>
            <person name="Krogh S."/>
            <person name="Kumano M."/>
            <person name="Kurita K."/>
            <person name="Lapidus A."/>
            <person name="Lardinois S."/>
            <person name="Lauber J."/>
            <person name="Lazarevic V."/>
            <person name="Lee S.-M."/>
            <person name="Levine A."/>
            <person name="Liu H."/>
            <person name="Masuda S."/>
            <person name="Mauel C."/>
            <person name="Medigue C."/>
            <person name="Medina N."/>
            <person name="Mellado R.P."/>
            <person name="Mizuno M."/>
            <person name="Moestl D."/>
            <person name="Nakai S."/>
            <person name="Noback M."/>
            <person name="Noone D."/>
            <person name="O'Reilly M."/>
            <person name="Ogawa K."/>
            <person name="Ogiwara A."/>
            <person name="Oudega B."/>
            <person name="Park S.-H."/>
            <person name="Parro V."/>
            <person name="Pohl T.M."/>
            <person name="Portetelle D."/>
            <person name="Porwollik S."/>
            <person name="Prescott A.M."/>
            <person name="Presecan E."/>
            <person name="Pujic P."/>
            <person name="Purnelle B."/>
            <person name="Rapoport G."/>
            <person name="Rey M."/>
            <person name="Reynolds S."/>
            <person name="Rieger M."/>
            <person name="Rivolta C."/>
            <person name="Rocha E."/>
            <person name="Roche B."/>
            <person name="Rose M."/>
            <person name="Sadaie Y."/>
            <person name="Sato T."/>
            <person name="Scanlan E."/>
            <person name="Schleich S."/>
            <person name="Schroeter R."/>
            <person name="Scoffone F."/>
            <person name="Sekiguchi J."/>
            <person name="Sekowska A."/>
            <person name="Seror S.J."/>
            <person name="Serror P."/>
            <person name="Shin B.-S."/>
            <person name="Soldo B."/>
            <person name="Sorokin A."/>
            <person name="Tacconi E."/>
            <person name="Takagi T."/>
            <person name="Takahashi H."/>
            <person name="Takemaru K."/>
            <person name="Takeuchi M."/>
            <person name="Tamakoshi A."/>
            <person name="Tanaka T."/>
            <person name="Terpstra P."/>
            <person name="Tognoni A."/>
            <person name="Tosato V."/>
            <person name="Uchiyama S."/>
            <person name="Vandenbol M."/>
            <person name="Vannier F."/>
            <person name="Vassarotti A."/>
            <person name="Viari A."/>
            <person name="Wambutt R."/>
            <person name="Wedler E."/>
            <person name="Wedler H."/>
            <person name="Weitzenegger T."/>
            <person name="Winters P."/>
            <person name="Wipat A."/>
            <person name="Yamamoto H."/>
            <person name="Yamane K."/>
            <person name="Yasumoto K."/>
            <person name="Yata K."/>
            <person name="Yoshida K."/>
            <person name="Yoshikawa H.-F."/>
            <person name="Zumstein E."/>
            <person name="Yoshikawa H."/>
            <person name="Danchin A."/>
        </authorList>
    </citation>
    <scope>NUCLEOTIDE SEQUENCE [LARGE SCALE GENOMIC DNA]</scope>
    <source>
        <strain>168</strain>
    </source>
</reference>
<comment type="similarity">
    <text evidence="2">In the C-terminal section; belongs to the bacterial solute-binding protein 5 family.</text>
</comment>
<gene>
    <name type="primary">yhjP</name>
    <name type="ordered locus">BSU10590</name>
</gene>
<keyword id="KW-0238">DNA-binding</keyword>
<keyword id="KW-1185">Reference proteome</keyword>
<name>YHJP_BACSU</name>
<accession>O07570</accession>
<accession>Q796R6</accession>
<dbReference type="EMBL" id="Y14081">
    <property type="protein sequence ID" value="CAA74478.1"/>
    <property type="molecule type" value="Genomic_DNA"/>
</dbReference>
<dbReference type="EMBL" id="AL009126">
    <property type="protein sequence ID" value="CAB12899.1"/>
    <property type="molecule type" value="Genomic_DNA"/>
</dbReference>
<dbReference type="PIR" id="G69834">
    <property type="entry name" value="G69834"/>
</dbReference>
<dbReference type="RefSeq" id="NP_388940.1">
    <property type="nucleotide sequence ID" value="NC_000964.3"/>
</dbReference>
<dbReference type="RefSeq" id="WP_003245281.1">
    <property type="nucleotide sequence ID" value="NZ_OZ025638.1"/>
</dbReference>
<dbReference type="SMR" id="O07570"/>
<dbReference type="FunCoup" id="O07570">
    <property type="interactions" value="70"/>
</dbReference>
<dbReference type="STRING" id="224308.BSU10590"/>
<dbReference type="PaxDb" id="224308-BSU10590"/>
<dbReference type="EnsemblBacteria" id="CAB12899">
    <property type="protein sequence ID" value="CAB12899"/>
    <property type="gene ID" value="BSU_10590"/>
</dbReference>
<dbReference type="GeneID" id="936342"/>
<dbReference type="KEGG" id="bsu:BSU10590"/>
<dbReference type="PATRIC" id="fig|224308.179.peg.1138"/>
<dbReference type="eggNOG" id="COG4533">
    <property type="taxonomic scope" value="Bacteria"/>
</dbReference>
<dbReference type="InParanoid" id="O07570"/>
<dbReference type="OrthoDB" id="5894719at2"/>
<dbReference type="PhylomeDB" id="O07570"/>
<dbReference type="BioCyc" id="BSUB:BSU10590-MONOMER"/>
<dbReference type="Proteomes" id="UP000001570">
    <property type="component" value="Chromosome"/>
</dbReference>
<dbReference type="GO" id="GO:0003677">
    <property type="term" value="F:DNA binding"/>
    <property type="evidence" value="ECO:0007669"/>
    <property type="project" value="UniProtKB-KW"/>
</dbReference>
<dbReference type="GO" id="GO:1904680">
    <property type="term" value="F:peptide transmembrane transporter activity"/>
    <property type="evidence" value="ECO:0000318"/>
    <property type="project" value="GO_Central"/>
</dbReference>
<dbReference type="GO" id="GO:0015833">
    <property type="term" value="P:peptide transport"/>
    <property type="evidence" value="ECO:0000318"/>
    <property type="project" value="GO_Central"/>
</dbReference>
<dbReference type="CDD" id="cd08507">
    <property type="entry name" value="PBP2_SgrR_like"/>
    <property type="match status" value="1"/>
</dbReference>
<dbReference type="FunFam" id="3.10.105.10:FF:000050">
    <property type="entry name" value="Oligopeptide ABC transporter periplasmic oligopeptide-binding protein OppA"/>
    <property type="match status" value="1"/>
</dbReference>
<dbReference type="Gene3D" id="3.10.105.10">
    <property type="entry name" value="Dipeptide-binding Protein, Domain 3"/>
    <property type="match status" value="1"/>
</dbReference>
<dbReference type="Gene3D" id="3.40.190.10">
    <property type="entry name" value="Periplasmic binding protein-like II"/>
    <property type="match status" value="1"/>
</dbReference>
<dbReference type="InterPro" id="IPR039424">
    <property type="entry name" value="SBP_5"/>
</dbReference>
<dbReference type="InterPro" id="IPR000914">
    <property type="entry name" value="SBP_5_dom"/>
</dbReference>
<dbReference type="InterPro" id="IPR025370">
    <property type="entry name" value="SgrR_HTH_N"/>
</dbReference>
<dbReference type="PANTHER" id="PTHR30290:SF72">
    <property type="entry name" value="HTH-TYPE TRANSCRIPTIONAL REGULATOR SGRR"/>
    <property type="match status" value="1"/>
</dbReference>
<dbReference type="PANTHER" id="PTHR30290">
    <property type="entry name" value="PERIPLASMIC BINDING COMPONENT OF ABC TRANSPORTER"/>
    <property type="match status" value="1"/>
</dbReference>
<dbReference type="Pfam" id="PF00496">
    <property type="entry name" value="SBP_bac_5"/>
    <property type="match status" value="1"/>
</dbReference>
<dbReference type="Pfam" id="PF12793">
    <property type="entry name" value="SgrR_N"/>
    <property type="match status" value="1"/>
</dbReference>
<dbReference type="SUPFAM" id="SSF53850">
    <property type="entry name" value="Periplasmic binding protein-like II"/>
    <property type="match status" value="1"/>
</dbReference>
<proteinExistence type="inferred from homology"/>
<organism>
    <name type="scientific">Bacillus subtilis (strain 168)</name>
    <dbReference type="NCBI Taxonomy" id="224308"/>
    <lineage>
        <taxon>Bacteria</taxon>
        <taxon>Bacillati</taxon>
        <taxon>Bacillota</taxon>
        <taxon>Bacilli</taxon>
        <taxon>Bacillales</taxon>
        <taxon>Bacillaceae</taxon>
        <taxon>Bacillus</taxon>
    </lineage>
</organism>